<comment type="function">
    <text evidence="1">Converts 2C-methyl-D-erythritol 2,4-cyclodiphosphate (ME-2,4cPP) into 1-hydroxy-2-methyl-2-(E)-butenyl 4-diphosphate.</text>
</comment>
<comment type="catalytic activity">
    <reaction evidence="1">
        <text>(2E)-4-hydroxy-3-methylbut-2-enyl diphosphate + oxidized [flavodoxin] + H2O + 2 H(+) = 2-C-methyl-D-erythritol 2,4-cyclic diphosphate + reduced [flavodoxin]</text>
        <dbReference type="Rhea" id="RHEA:43604"/>
        <dbReference type="Rhea" id="RHEA-COMP:10622"/>
        <dbReference type="Rhea" id="RHEA-COMP:10623"/>
        <dbReference type="ChEBI" id="CHEBI:15377"/>
        <dbReference type="ChEBI" id="CHEBI:15378"/>
        <dbReference type="ChEBI" id="CHEBI:57618"/>
        <dbReference type="ChEBI" id="CHEBI:58210"/>
        <dbReference type="ChEBI" id="CHEBI:58483"/>
        <dbReference type="ChEBI" id="CHEBI:128753"/>
        <dbReference type="EC" id="1.17.7.3"/>
    </reaction>
</comment>
<comment type="cofactor">
    <cofactor evidence="1">
        <name>[4Fe-4S] cluster</name>
        <dbReference type="ChEBI" id="CHEBI:49883"/>
    </cofactor>
    <text evidence="1">Binds 1 [4Fe-4S] cluster.</text>
</comment>
<comment type="pathway">
    <text evidence="1">Isoprenoid biosynthesis; isopentenyl diphosphate biosynthesis via DXP pathway; isopentenyl diphosphate from 1-deoxy-D-xylulose 5-phosphate: step 5/6.</text>
</comment>
<comment type="similarity">
    <text evidence="1">Belongs to the IspG family.</text>
</comment>
<keyword id="KW-0004">4Fe-4S</keyword>
<keyword id="KW-0408">Iron</keyword>
<keyword id="KW-0411">Iron-sulfur</keyword>
<keyword id="KW-0414">Isoprene biosynthesis</keyword>
<keyword id="KW-0479">Metal-binding</keyword>
<keyword id="KW-0560">Oxidoreductase</keyword>
<keyword id="KW-1185">Reference proteome</keyword>
<proteinExistence type="inferred from homology"/>
<feature type="chain" id="PRO_0000190667" description="4-hydroxy-3-methylbut-2-en-1-yl diphosphate synthase (flavodoxin)">
    <location>
        <begin position="1"/>
        <end position="377"/>
    </location>
</feature>
<feature type="binding site" evidence="1">
    <location>
        <position position="272"/>
    </location>
    <ligand>
        <name>[4Fe-4S] cluster</name>
        <dbReference type="ChEBI" id="CHEBI:49883"/>
    </ligand>
</feature>
<feature type="binding site" evidence="1">
    <location>
        <position position="275"/>
    </location>
    <ligand>
        <name>[4Fe-4S] cluster</name>
        <dbReference type="ChEBI" id="CHEBI:49883"/>
    </ligand>
</feature>
<feature type="binding site" evidence="1">
    <location>
        <position position="307"/>
    </location>
    <ligand>
        <name>[4Fe-4S] cluster</name>
        <dbReference type="ChEBI" id="CHEBI:49883"/>
    </ligand>
</feature>
<feature type="binding site" evidence="1">
    <location>
        <position position="314"/>
    </location>
    <ligand>
        <name>[4Fe-4S] cluster</name>
        <dbReference type="ChEBI" id="CHEBI:49883"/>
    </ligand>
</feature>
<sequence length="377" mass="39941">MSIRPWRHIERRKSRKIMVGNVAVGGDAPISVQTMTNTPTVDAQATIAQIKRCEAVGVDLIRVSCPDKESTAALKDIVRAAEVPIIADIHFHYKRALEAADAGAACLRINPGNIGSSERVAEVVRAAKANGCAIRIGVNAGSLEKELLEKYGEPCPDALVESALNHIKLLQDQDFHEFKVAVKASDVFLAVASYKALAKAVDCPLHLGITEAGGLIGGTVKSALGIGNLLWDGIGDTLRVSLSADPEQEVRVGYDILKTLDLRTRGVRVVSCPSCARQGFDVVKTVKALEERLAHIATPISLSILGCVVNGPGEARETDIGVTGGGQGKHMVFLSGVTDHTVEDAKMLDHIVSLVEAKAAEIEAEKAKEKAATVAAE</sequence>
<dbReference type="EC" id="1.17.7.3" evidence="1"/>
<dbReference type="EMBL" id="AE008692">
    <property type="protein sequence ID" value="AAV88804.1"/>
    <property type="molecule type" value="Genomic_DNA"/>
</dbReference>
<dbReference type="RefSeq" id="WP_011240135.1">
    <property type="nucleotide sequence ID" value="NZ_CP035711.1"/>
</dbReference>
<dbReference type="SMR" id="Q5NR50"/>
<dbReference type="STRING" id="264203.ZMO0180"/>
<dbReference type="KEGG" id="zmo:ZMO0180"/>
<dbReference type="eggNOG" id="COG0821">
    <property type="taxonomic scope" value="Bacteria"/>
</dbReference>
<dbReference type="HOGENOM" id="CLU_042258_0_0_5"/>
<dbReference type="UniPathway" id="UPA00056">
    <property type="reaction ID" value="UER00096"/>
</dbReference>
<dbReference type="Proteomes" id="UP000001173">
    <property type="component" value="Chromosome"/>
</dbReference>
<dbReference type="GO" id="GO:0051539">
    <property type="term" value="F:4 iron, 4 sulfur cluster binding"/>
    <property type="evidence" value="ECO:0007669"/>
    <property type="project" value="UniProtKB-UniRule"/>
</dbReference>
<dbReference type="GO" id="GO:0046429">
    <property type="term" value="F:4-hydroxy-3-methylbut-2-en-1-yl diphosphate synthase activity (ferredoxin)"/>
    <property type="evidence" value="ECO:0007669"/>
    <property type="project" value="UniProtKB-UniRule"/>
</dbReference>
<dbReference type="GO" id="GO:0141197">
    <property type="term" value="F:4-hydroxy-3-methylbut-2-enyl-diphosphate synthase activity (flavodoxin)"/>
    <property type="evidence" value="ECO:0007669"/>
    <property type="project" value="UniProtKB-EC"/>
</dbReference>
<dbReference type="GO" id="GO:0005506">
    <property type="term" value="F:iron ion binding"/>
    <property type="evidence" value="ECO:0007669"/>
    <property type="project" value="InterPro"/>
</dbReference>
<dbReference type="GO" id="GO:0019288">
    <property type="term" value="P:isopentenyl diphosphate biosynthetic process, methylerythritol 4-phosphate pathway"/>
    <property type="evidence" value="ECO:0007669"/>
    <property type="project" value="UniProtKB-UniRule"/>
</dbReference>
<dbReference type="GO" id="GO:0016114">
    <property type="term" value="P:terpenoid biosynthetic process"/>
    <property type="evidence" value="ECO:0007669"/>
    <property type="project" value="InterPro"/>
</dbReference>
<dbReference type="FunFam" id="3.20.20.20:FF:000001">
    <property type="entry name" value="4-hydroxy-3-methylbut-2-en-1-yl diphosphate synthase (flavodoxin)"/>
    <property type="match status" value="1"/>
</dbReference>
<dbReference type="Gene3D" id="3.20.20.20">
    <property type="entry name" value="Dihydropteroate synthase-like"/>
    <property type="match status" value="1"/>
</dbReference>
<dbReference type="Gene3D" id="3.30.413.10">
    <property type="entry name" value="Sulfite Reductase Hemoprotein, domain 1"/>
    <property type="match status" value="1"/>
</dbReference>
<dbReference type="HAMAP" id="MF_00159">
    <property type="entry name" value="IspG"/>
    <property type="match status" value="1"/>
</dbReference>
<dbReference type="InterPro" id="IPR011005">
    <property type="entry name" value="Dihydropteroate_synth-like_sf"/>
</dbReference>
<dbReference type="InterPro" id="IPR016425">
    <property type="entry name" value="IspG_bac"/>
</dbReference>
<dbReference type="InterPro" id="IPR004588">
    <property type="entry name" value="IspG_bac-typ"/>
</dbReference>
<dbReference type="InterPro" id="IPR045854">
    <property type="entry name" value="NO2/SO3_Rdtase_4Fe4S_sf"/>
</dbReference>
<dbReference type="NCBIfam" id="TIGR00612">
    <property type="entry name" value="ispG_gcpE"/>
    <property type="match status" value="1"/>
</dbReference>
<dbReference type="NCBIfam" id="NF001540">
    <property type="entry name" value="PRK00366.1"/>
    <property type="match status" value="1"/>
</dbReference>
<dbReference type="PANTHER" id="PTHR30454">
    <property type="entry name" value="4-HYDROXY-3-METHYLBUT-2-EN-1-YL DIPHOSPHATE SYNTHASE"/>
    <property type="match status" value="1"/>
</dbReference>
<dbReference type="PANTHER" id="PTHR30454:SF0">
    <property type="entry name" value="4-HYDROXY-3-METHYLBUT-2-EN-1-YL DIPHOSPHATE SYNTHASE (FERREDOXIN), CHLOROPLASTIC"/>
    <property type="match status" value="1"/>
</dbReference>
<dbReference type="Pfam" id="PF04551">
    <property type="entry name" value="GcpE"/>
    <property type="match status" value="1"/>
</dbReference>
<dbReference type="PIRSF" id="PIRSF004640">
    <property type="entry name" value="IspG"/>
    <property type="match status" value="1"/>
</dbReference>
<dbReference type="SUPFAM" id="SSF51412">
    <property type="entry name" value="Inosine monophosphate dehydrogenase (IMPDH)"/>
    <property type="match status" value="1"/>
</dbReference>
<dbReference type="SUPFAM" id="SSF56014">
    <property type="entry name" value="Nitrite and sulphite reductase 4Fe-4S domain-like"/>
    <property type="match status" value="1"/>
</dbReference>
<reference key="1">
    <citation type="journal article" date="2005" name="Nat. Biotechnol.">
        <title>The genome sequence of the ethanologenic bacterium Zymomonas mobilis ZM4.</title>
        <authorList>
            <person name="Seo J.-S."/>
            <person name="Chong H."/>
            <person name="Park H.S."/>
            <person name="Yoon K.-O."/>
            <person name="Jung C."/>
            <person name="Kim J.J."/>
            <person name="Hong J.H."/>
            <person name="Kim H."/>
            <person name="Kim J.-H."/>
            <person name="Kil J.-I."/>
            <person name="Park C.J."/>
            <person name="Oh H.-M."/>
            <person name="Lee J.-S."/>
            <person name="Jin S.-J."/>
            <person name="Um H.-W."/>
            <person name="Lee H.-J."/>
            <person name="Oh S.-J."/>
            <person name="Kim J.Y."/>
            <person name="Kang H.L."/>
            <person name="Lee S.Y."/>
            <person name="Lee K.J."/>
            <person name="Kang H.S."/>
        </authorList>
    </citation>
    <scope>NUCLEOTIDE SEQUENCE [LARGE SCALE GENOMIC DNA]</scope>
    <source>
        <strain>ATCC 31821 / ZM4 / CP4</strain>
    </source>
</reference>
<evidence type="ECO:0000255" key="1">
    <source>
        <dbReference type="HAMAP-Rule" id="MF_00159"/>
    </source>
</evidence>
<name>ISPG_ZYMMO</name>
<accession>Q5NR50</accession>
<protein>
    <recommendedName>
        <fullName evidence="1">4-hydroxy-3-methylbut-2-en-1-yl diphosphate synthase (flavodoxin)</fullName>
        <ecNumber evidence="1">1.17.7.3</ecNumber>
    </recommendedName>
    <alternativeName>
        <fullName evidence="1">1-hydroxy-2-methyl-2-(E)-butenyl 4-diphosphate synthase</fullName>
    </alternativeName>
</protein>
<organism>
    <name type="scientific">Zymomonas mobilis subsp. mobilis (strain ATCC 31821 / ZM4 / CP4)</name>
    <dbReference type="NCBI Taxonomy" id="264203"/>
    <lineage>
        <taxon>Bacteria</taxon>
        <taxon>Pseudomonadati</taxon>
        <taxon>Pseudomonadota</taxon>
        <taxon>Alphaproteobacteria</taxon>
        <taxon>Sphingomonadales</taxon>
        <taxon>Zymomonadaceae</taxon>
        <taxon>Zymomonas</taxon>
    </lineage>
</organism>
<gene>
    <name evidence="1" type="primary">ispG</name>
    <name type="ordered locus">ZMO0180</name>
</gene>